<name>PUR9_CLOBK</name>
<organism>
    <name type="scientific">Clostridium botulinum (strain Okra / Type B1)</name>
    <dbReference type="NCBI Taxonomy" id="498213"/>
    <lineage>
        <taxon>Bacteria</taxon>
        <taxon>Bacillati</taxon>
        <taxon>Bacillota</taxon>
        <taxon>Clostridia</taxon>
        <taxon>Eubacteriales</taxon>
        <taxon>Clostridiaceae</taxon>
        <taxon>Clostridium</taxon>
    </lineage>
</organism>
<accession>B1IL57</accession>
<comment type="catalytic activity">
    <reaction evidence="1">
        <text>(6R)-10-formyltetrahydrofolate + 5-amino-1-(5-phospho-beta-D-ribosyl)imidazole-4-carboxamide = 5-formamido-1-(5-phospho-D-ribosyl)imidazole-4-carboxamide + (6S)-5,6,7,8-tetrahydrofolate</text>
        <dbReference type="Rhea" id="RHEA:22192"/>
        <dbReference type="ChEBI" id="CHEBI:57453"/>
        <dbReference type="ChEBI" id="CHEBI:58467"/>
        <dbReference type="ChEBI" id="CHEBI:58475"/>
        <dbReference type="ChEBI" id="CHEBI:195366"/>
        <dbReference type="EC" id="2.1.2.3"/>
    </reaction>
</comment>
<comment type="catalytic activity">
    <reaction evidence="1">
        <text>IMP + H2O = 5-formamido-1-(5-phospho-D-ribosyl)imidazole-4-carboxamide</text>
        <dbReference type="Rhea" id="RHEA:18445"/>
        <dbReference type="ChEBI" id="CHEBI:15377"/>
        <dbReference type="ChEBI" id="CHEBI:58053"/>
        <dbReference type="ChEBI" id="CHEBI:58467"/>
        <dbReference type="EC" id="3.5.4.10"/>
    </reaction>
</comment>
<comment type="pathway">
    <text evidence="1">Purine metabolism; IMP biosynthesis via de novo pathway; 5-formamido-1-(5-phospho-D-ribosyl)imidazole-4-carboxamide from 5-amino-1-(5-phospho-D-ribosyl)imidazole-4-carboxamide (10-formyl THF route): step 1/1.</text>
</comment>
<comment type="pathway">
    <text evidence="1">Purine metabolism; IMP biosynthesis via de novo pathway; IMP from 5-formamido-1-(5-phospho-D-ribosyl)imidazole-4-carboxamide: step 1/1.</text>
</comment>
<comment type="domain">
    <text evidence="1">The IMP cyclohydrolase activity resides in the N-terminal region.</text>
</comment>
<comment type="similarity">
    <text evidence="1">Belongs to the PurH family.</text>
</comment>
<dbReference type="EC" id="2.1.2.3" evidence="1"/>
<dbReference type="EC" id="3.5.4.10" evidence="1"/>
<dbReference type="EMBL" id="CP000939">
    <property type="protein sequence ID" value="ACA43511.1"/>
    <property type="molecule type" value="Genomic_DNA"/>
</dbReference>
<dbReference type="RefSeq" id="WP_003403046.1">
    <property type="nucleotide sequence ID" value="NC_010516.1"/>
</dbReference>
<dbReference type="SMR" id="B1IL57"/>
<dbReference type="KEGG" id="cbb:CLD_1667"/>
<dbReference type="HOGENOM" id="CLU_016316_5_2_9"/>
<dbReference type="UniPathway" id="UPA00074">
    <property type="reaction ID" value="UER00133"/>
</dbReference>
<dbReference type="UniPathway" id="UPA00074">
    <property type="reaction ID" value="UER00135"/>
</dbReference>
<dbReference type="Proteomes" id="UP000008541">
    <property type="component" value="Chromosome"/>
</dbReference>
<dbReference type="GO" id="GO:0005829">
    <property type="term" value="C:cytosol"/>
    <property type="evidence" value="ECO:0007669"/>
    <property type="project" value="TreeGrafter"/>
</dbReference>
<dbReference type="GO" id="GO:0003937">
    <property type="term" value="F:IMP cyclohydrolase activity"/>
    <property type="evidence" value="ECO:0007669"/>
    <property type="project" value="UniProtKB-UniRule"/>
</dbReference>
<dbReference type="GO" id="GO:0004643">
    <property type="term" value="F:phosphoribosylaminoimidazolecarboxamide formyltransferase activity"/>
    <property type="evidence" value="ECO:0007669"/>
    <property type="project" value="UniProtKB-UniRule"/>
</dbReference>
<dbReference type="GO" id="GO:0006189">
    <property type="term" value="P:'de novo' IMP biosynthetic process"/>
    <property type="evidence" value="ECO:0007669"/>
    <property type="project" value="UniProtKB-UniRule"/>
</dbReference>
<dbReference type="CDD" id="cd01421">
    <property type="entry name" value="IMPCH"/>
    <property type="match status" value="1"/>
</dbReference>
<dbReference type="FunFam" id="3.40.140.20:FF:000001">
    <property type="entry name" value="Bifunctional purine biosynthesis protein PurH"/>
    <property type="match status" value="1"/>
</dbReference>
<dbReference type="FunFam" id="3.40.140.20:FF:000002">
    <property type="entry name" value="Bifunctional purine biosynthesis protein PurH"/>
    <property type="match status" value="1"/>
</dbReference>
<dbReference type="FunFam" id="3.40.50.1380:FF:000001">
    <property type="entry name" value="Bifunctional purine biosynthesis protein PurH"/>
    <property type="match status" value="1"/>
</dbReference>
<dbReference type="Gene3D" id="3.40.140.20">
    <property type="match status" value="2"/>
</dbReference>
<dbReference type="Gene3D" id="3.40.50.1380">
    <property type="entry name" value="Methylglyoxal synthase-like domain"/>
    <property type="match status" value="1"/>
</dbReference>
<dbReference type="HAMAP" id="MF_00139">
    <property type="entry name" value="PurH"/>
    <property type="match status" value="1"/>
</dbReference>
<dbReference type="InterPro" id="IPR024051">
    <property type="entry name" value="AICAR_Tfase_dup_dom_sf"/>
</dbReference>
<dbReference type="InterPro" id="IPR016193">
    <property type="entry name" value="Cytidine_deaminase-like"/>
</dbReference>
<dbReference type="InterPro" id="IPR011607">
    <property type="entry name" value="MGS-like_dom"/>
</dbReference>
<dbReference type="InterPro" id="IPR036914">
    <property type="entry name" value="MGS-like_dom_sf"/>
</dbReference>
<dbReference type="InterPro" id="IPR002695">
    <property type="entry name" value="PurH-like"/>
</dbReference>
<dbReference type="NCBIfam" id="NF002049">
    <property type="entry name" value="PRK00881.1"/>
    <property type="match status" value="1"/>
</dbReference>
<dbReference type="NCBIfam" id="TIGR00355">
    <property type="entry name" value="purH"/>
    <property type="match status" value="1"/>
</dbReference>
<dbReference type="PANTHER" id="PTHR11692:SF0">
    <property type="entry name" value="BIFUNCTIONAL PURINE BIOSYNTHESIS PROTEIN ATIC"/>
    <property type="match status" value="1"/>
</dbReference>
<dbReference type="PANTHER" id="PTHR11692">
    <property type="entry name" value="BIFUNCTIONAL PURINE BIOSYNTHESIS PROTEIN PURH"/>
    <property type="match status" value="1"/>
</dbReference>
<dbReference type="Pfam" id="PF01808">
    <property type="entry name" value="AICARFT_IMPCHas"/>
    <property type="match status" value="1"/>
</dbReference>
<dbReference type="Pfam" id="PF02142">
    <property type="entry name" value="MGS"/>
    <property type="match status" value="1"/>
</dbReference>
<dbReference type="PIRSF" id="PIRSF000414">
    <property type="entry name" value="AICARFT_IMPCHas"/>
    <property type="match status" value="1"/>
</dbReference>
<dbReference type="SMART" id="SM00798">
    <property type="entry name" value="AICARFT_IMPCHas"/>
    <property type="match status" value="1"/>
</dbReference>
<dbReference type="SMART" id="SM00851">
    <property type="entry name" value="MGS"/>
    <property type="match status" value="1"/>
</dbReference>
<dbReference type="SUPFAM" id="SSF53927">
    <property type="entry name" value="Cytidine deaminase-like"/>
    <property type="match status" value="1"/>
</dbReference>
<dbReference type="SUPFAM" id="SSF52335">
    <property type="entry name" value="Methylglyoxal synthase-like"/>
    <property type="match status" value="1"/>
</dbReference>
<dbReference type="PROSITE" id="PS51855">
    <property type="entry name" value="MGS"/>
    <property type="match status" value="1"/>
</dbReference>
<evidence type="ECO:0000255" key="1">
    <source>
        <dbReference type="HAMAP-Rule" id="MF_00139"/>
    </source>
</evidence>
<evidence type="ECO:0000255" key="2">
    <source>
        <dbReference type="PROSITE-ProRule" id="PRU01202"/>
    </source>
</evidence>
<reference key="1">
    <citation type="journal article" date="2007" name="PLoS ONE">
        <title>Analysis of the neurotoxin complex genes in Clostridium botulinum A1-A4 and B1 strains: BoNT/A3, /Ba4 and /B1 clusters are located within plasmids.</title>
        <authorList>
            <person name="Smith T.J."/>
            <person name="Hill K.K."/>
            <person name="Foley B.T."/>
            <person name="Detter J.C."/>
            <person name="Munk A.C."/>
            <person name="Bruce D.C."/>
            <person name="Doggett N.A."/>
            <person name="Smith L.A."/>
            <person name="Marks J.D."/>
            <person name="Xie G."/>
            <person name="Brettin T.S."/>
        </authorList>
    </citation>
    <scope>NUCLEOTIDE SEQUENCE [LARGE SCALE GENOMIC DNA]</scope>
    <source>
        <strain>Okra / Type B1</strain>
    </source>
</reference>
<protein>
    <recommendedName>
        <fullName evidence="1">Bifunctional purine biosynthesis protein PurH</fullName>
    </recommendedName>
    <domain>
        <recommendedName>
            <fullName evidence="1">Phosphoribosylaminoimidazolecarboxamide formyltransferase</fullName>
            <ecNumber evidence="1">2.1.2.3</ecNumber>
        </recommendedName>
        <alternativeName>
            <fullName evidence="1">AICAR transformylase</fullName>
        </alternativeName>
    </domain>
    <domain>
        <recommendedName>
            <fullName evidence="1">IMP cyclohydrolase</fullName>
            <ecNumber evidence="1">3.5.4.10</ecNumber>
        </recommendedName>
        <alternativeName>
            <fullName evidence="1">ATIC</fullName>
        </alternativeName>
        <alternativeName>
            <fullName evidence="1">IMP synthase</fullName>
        </alternativeName>
        <alternativeName>
            <fullName evidence="1">Inosinicase</fullName>
        </alternativeName>
    </domain>
</protein>
<feature type="chain" id="PRO_1000096055" description="Bifunctional purine biosynthesis protein PurH">
    <location>
        <begin position="1"/>
        <end position="499"/>
    </location>
</feature>
<feature type="domain" description="MGS-like" evidence="2">
    <location>
        <begin position="1"/>
        <end position="144"/>
    </location>
</feature>
<gene>
    <name evidence="1" type="primary">purH</name>
    <name type="ordered locus">CLD_1667</name>
</gene>
<proteinExistence type="inferred from homology"/>
<sequence length="499" mass="55792">MIKRALISVFDKTGILDLAKFLESRDVEIISTGGTYKHLKENGVKVIDIEEVTGFPEMLDGRVKTLNPLIHGGILAIRDNEEHMKVIEEKGINPIDMVVVNLYPFFNKVEENLSFDEKVEFIDIGGPTMIRAAAKNFKDVVVLTDTKDYENVIDEIKENDQVNIKTRKKLAGKVFNLMSAYDAAISNFLLEEEYPEYLTLSYKKNMDLRYGENPHQTAAYYTSTVGKYPMKNFEKLNGKELSYNNIKDMDIAWKTVCEFEEVACCALKHNTPCGVAIGDTVQEVYTKAYECDPISIFGGIVAFNRKVDKETAENLAKIFLEIVVAPDFDEDALEVLKNKKNLRVIKCEEKSTEGKDMAKVDGGILVQKSDNKLLEDTKVVTEKSPTEQEMKDLIFGMKVVKYVKSNAIVVVKDGMAKGIGGGQVNRIWAAKEALDRAGDGIVLASDAFFPFGDVAEEAAKWGIKAIIQPGGSIRDEESIKVCDEKGISMVFTGIRHFKH</sequence>
<keyword id="KW-0378">Hydrolase</keyword>
<keyword id="KW-0511">Multifunctional enzyme</keyword>
<keyword id="KW-0658">Purine biosynthesis</keyword>
<keyword id="KW-0808">Transferase</keyword>